<sequence>MKVKLICVGKLKERYLKDGISEYQKRLSRFCQFEMIELTDERTPDKASFADNQLIMSKEAQRIHKKIGERDFVIALAIEGKQFPSETFSELISGVTVKGYSTITFIIGGSLGLDSIIKKRANMLMSFGLLTLPHQLMRLVLTEQIYRAFMITQGSPYHK</sequence>
<accession>B5XJC8</accession>
<organism>
    <name type="scientific">Streptococcus pyogenes serotype M49 (strain NZ131)</name>
    <dbReference type="NCBI Taxonomy" id="471876"/>
    <lineage>
        <taxon>Bacteria</taxon>
        <taxon>Bacillati</taxon>
        <taxon>Bacillota</taxon>
        <taxon>Bacilli</taxon>
        <taxon>Lactobacillales</taxon>
        <taxon>Streptococcaceae</taxon>
        <taxon>Streptococcus</taxon>
    </lineage>
</organism>
<gene>
    <name evidence="1" type="primary">rlmH</name>
    <name type="ordered locus">Spy49_1820c</name>
</gene>
<name>RLMH_STRPZ</name>
<keyword id="KW-0963">Cytoplasm</keyword>
<keyword id="KW-0489">Methyltransferase</keyword>
<keyword id="KW-0698">rRNA processing</keyword>
<keyword id="KW-0949">S-adenosyl-L-methionine</keyword>
<keyword id="KW-0808">Transferase</keyword>
<feature type="chain" id="PRO_0000366663" description="Ribosomal RNA large subunit methyltransferase H">
    <location>
        <begin position="1"/>
        <end position="159"/>
    </location>
</feature>
<feature type="binding site" evidence="1">
    <location>
        <position position="76"/>
    </location>
    <ligand>
        <name>S-adenosyl-L-methionine</name>
        <dbReference type="ChEBI" id="CHEBI:59789"/>
    </ligand>
</feature>
<feature type="binding site" evidence="1">
    <location>
        <position position="108"/>
    </location>
    <ligand>
        <name>S-adenosyl-L-methionine</name>
        <dbReference type="ChEBI" id="CHEBI:59789"/>
    </ligand>
</feature>
<feature type="binding site" evidence="1">
    <location>
        <begin position="127"/>
        <end position="132"/>
    </location>
    <ligand>
        <name>S-adenosyl-L-methionine</name>
        <dbReference type="ChEBI" id="CHEBI:59789"/>
    </ligand>
</feature>
<evidence type="ECO:0000255" key="1">
    <source>
        <dbReference type="HAMAP-Rule" id="MF_00658"/>
    </source>
</evidence>
<dbReference type="EC" id="2.1.1.177" evidence="1"/>
<dbReference type="EMBL" id="CP000829">
    <property type="protein sequence ID" value="ACI62062.1"/>
    <property type="molecule type" value="Genomic_DNA"/>
</dbReference>
<dbReference type="SMR" id="B5XJC8"/>
<dbReference type="KEGG" id="soz:Spy49_1820c"/>
<dbReference type="HOGENOM" id="CLU_100552_0_0_9"/>
<dbReference type="Proteomes" id="UP000001039">
    <property type="component" value="Chromosome"/>
</dbReference>
<dbReference type="GO" id="GO:0005737">
    <property type="term" value="C:cytoplasm"/>
    <property type="evidence" value="ECO:0007669"/>
    <property type="project" value="UniProtKB-SubCell"/>
</dbReference>
<dbReference type="GO" id="GO:0070038">
    <property type="term" value="F:rRNA (pseudouridine-N3-)-methyltransferase activity"/>
    <property type="evidence" value="ECO:0007669"/>
    <property type="project" value="UniProtKB-UniRule"/>
</dbReference>
<dbReference type="CDD" id="cd18081">
    <property type="entry name" value="RlmH-like"/>
    <property type="match status" value="1"/>
</dbReference>
<dbReference type="Gene3D" id="3.40.1280.10">
    <property type="match status" value="1"/>
</dbReference>
<dbReference type="HAMAP" id="MF_00658">
    <property type="entry name" value="23SrRNA_methyltr_H"/>
    <property type="match status" value="1"/>
</dbReference>
<dbReference type="InterPro" id="IPR029028">
    <property type="entry name" value="Alpha/beta_knot_MTases"/>
</dbReference>
<dbReference type="InterPro" id="IPR003742">
    <property type="entry name" value="RlmH-like"/>
</dbReference>
<dbReference type="InterPro" id="IPR029026">
    <property type="entry name" value="tRNA_m1G_MTases_N"/>
</dbReference>
<dbReference type="NCBIfam" id="NF000985">
    <property type="entry name" value="PRK00103.1-3"/>
    <property type="match status" value="1"/>
</dbReference>
<dbReference type="NCBIfam" id="TIGR00246">
    <property type="entry name" value="tRNA_RlmH_YbeA"/>
    <property type="match status" value="1"/>
</dbReference>
<dbReference type="PANTHER" id="PTHR33603">
    <property type="entry name" value="METHYLTRANSFERASE"/>
    <property type="match status" value="1"/>
</dbReference>
<dbReference type="PANTHER" id="PTHR33603:SF1">
    <property type="entry name" value="RIBOSOMAL RNA LARGE SUBUNIT METHYLTRANSFERASE H"/>
    <property type="match status" value="1"/>
</dbReference>
<dbReference type="Pfam" id="PF02590">
    <property type="entry name" value="SPOUT_MTase"/>
    <property type="match status" value="1"/>
</dbReference>
<dbReference type="PIRSF" id="PIRSF004505">
    <property type="entry name" value="MT_bac"/>
    <property type="match status" value="1"/>
</dbReference>
<dbReference type="SUPFAM" id="SSF75217">
    <property type="entry name" value="alpha/beta knot"/>
    <property type="match status" value="1"/>
</dbReference>
<proteinExistence type="inferred from homology"/>
<comment type="function">
    <text evidence="1">Specifically methylates the pseudouridine at position 1915 (m3Psi1915) in 23S rRNA.</text>
</comment>
<comment type="catalytic activity">
    <reaction evidence="1">
        <text>pseudouridine(1915) in 23S rRNA + S-adenosyl-L-methionine = N(3)-methylpseudouridine(1915) in 23S rRNA + S-adenosyl-L-homocysteine + H(+)</text>
        <dbReference type="Rhea" id="RHEA:42752"/>
        <dbReference type="Rhea" id="RHEA-COMP:10221"/>
        <dbReference type="Rhea" id="RHEA-COMP:10222"/>
        <dbReference type="ChEBI" id="CHEBI:15378"/>
        <dbReference type="ChEBI" id="CHEBI:57856"/>
        <dbReference type="ChEBI" id="CHEBI:59789"/>
        <dbReference type="ChEBI" id="CHEBI:65314"/>
        <dbReference type="ChEBI" id="CHEBI:74486"/>
        <dbReference type="EC" id="2.1.1.177"/>
    </reaction>
</comment>
<comment type="subunit">
    <text evidence="1">Homodimer.</text>
</comment>
<comment type="subcellular location">
    <subcellularLocation>
        <location evidence="1">Cytoplasm</location>
    </subcellularLocation>
</comment>
<comment type="similarity">
    <text evidence="1">Belongs to the RNA methyltransferase RlmH family.</text>
</comment>
<protein>
    <recommendedName>
        <fullName evidence="1">Ribosomal RNA large subunit methyltransferase H</fullName>
        <ecNumber evidence="1">2.1.1.177</ecNumber>
    </recommendedName>
    <alternativeName>
        <fullName evidence="1">23S rRNA (pseudouridine1915-N3)-methyltransferase</fullName>
    </alternativeName>
    <alternativeName>
        <fullName evidence="1">23S rRNA m3Psi1915 methyltransferase</fullName>
    </alternativeName>
    <alternativeName>
        <fullName evidence="1">rRNA (pseudouridine-N3-)-methyltransferase RlmH</fullName>
    </alternativeName>
</protein>
<reference key="1">
    <citation type="journal article" date="2008" name="J. Bacteriol.">
        <title>Genome sequence of a nephritogenic and highly transformable M49 strain of Streptococcus pyogenes.</title>
        <authorList>
            <person name="McShan W.M."/>
            <person name="Ferretti J.J."/>
            <person name="Karasawa T."/>
            <person name="Suvorov A.N."/>
            <person name="Lin S."/>
            <person name="Qin B."/>
            <person name="Jia H."/>
            <person name="Kenton S."/>
            <person name="Najar F."/>
            <person name="Wu H."/>
            <person name="Scott J."/>
            <person name="Roe B.A."/>
            <person name="Savic D.J."/>
        </authorList>
    </citation>
    <scope>NUCLEOTIDE SEQUENCE [LARGE SCALE GENOMIC DNA]</scope>
    <source>
        <strain>NZ131</strain>
    </source>
</reference>